<dbReference type="EC" id="5.3.1.6" evidence="1"/>
<dbReference type="EMBL" id="CP001050">
    <property type="protein sequence ID" value="ACF29507.1"/>
    <property type="molecule type" value="Genomic_DNA"/>
</dbReference>
<dbReference type="RefSeq" id="WP_003688327.1">
    <property type="nucleotide sequence ID" value="NC_011035.1"/>
</dbReference>
<dbReference type="PDB" id="5UF2">
    <property type="method" value="X-ray"/>
    <property type="resolution" value="1.40 A"/>
    <property type="chains" value="A=1-223"/>
</dbReference>
<dbReference type="PDBsum" id="5UF2"/>
<dbReference type="SMR" id="B4RL16"/>
<dbReference type="GeneID" id="66753291"/>
<dbReference type="KEGG" id="ngk:NGK_0826"/>
<dbReference type="HOGENOM" id="CLU_056590_1_1_4"/>
<dbReference type="UniPathway" id="UPA00115">
    <property type="reaction ID" value="UER00412"/>
</dbReference>
<dbReference type="Proteomes" id="UP000002564">
    <property type="component" value="Chromosome"/>
</dbReference>
<dbReference type="GO" id="GO:0005829">
    <property type="term" value="C:cytosol"/>
    <property type="evidence" value="ECO:0007669"/>
    <property type="project" value="TreeGrafter"/>
</dbReference>
<dbReference type="GO" id="GO:0004751">
    <property type="term" value="F:ribose-5-phosphate isomerase activity"/>
    <property type="evidence" value="ECO:0007669"/>
    <property type="project" value="UniProtKB-UniRule"/>
</dbReference>
<dbReference type="GO" id="GO:0006014">
    <property type="term" value="P:D-ribose metabolic process"/>
    <property type="evidence" value="ECO:0007669"/>
    <property type="project" value="TreeGrafter"/>
</dbReference>
<dbReference type="GO" id="GO:0009052">
    <property type="term" value="P:pentose-phosphate shunt, non-oxidative branch"/>
    <property type="evidence" value="ECO:0007669"/>
    <property type="project" value="UniProtKB-UniRule"/>
</dbReference>
<dbReference type="CDD" id="cd01398">
    <property type="entry name" value="RPI_A"/>
    <property type="match status" value="1"/>
</dbReference>
<dbReference type="FunFam" id="3.40.50.1360:FF:000001">
    <property type="entry name" value="Ribose-5-phosphate isomerase A"/>
    <property type="match status" value="1"/>
</dbReference>
<dbReference type="Gene3D" id="3.30.70.260">
    <property type="match status" value="1"/>
</dbReference>
<dbReference type="Gene3D" id="3.40.50.1360">
    <property type="match status" value="1"/>
</dbReference>
<dbReference type="HAMAP" id="MF_00170">
    <property type="entry name" value="Rib_5P_isom_A"/>
    <property type="match status" value="1"/>
</dbReference>
<dbReference type="InterPro" id="IPR037171">
    <property type="entry name" value="NagB/RpiA_transferase-like"/>
</dbReference>
<dbReference type="InterPro" id="IPR020672">
    <property type="entry name" value="Ribose5P_isomerase_typA_subgr"/>
</dbReference>
<dbReference type="InterPro" id="IPR004788">
    <property type="entry name" value="Ribose5P_isomerase_type_A"/>
</dbReference>
<dbReference type="NCBIfam" id="NF001924">
    <property type="entry name" value="PRK00702.1"/>
    <property type="match status" value="1"/>
</dbReference>
<dbReference type="NCBIfam" id="TIGR00021">
    <property type="entry name" value="rpiA"/>
    <property type="match status" value="1"/>
</dbReference>
<dbReference type="PANTHER" id="PTHR11934">
    <property type="entry name" value="RIBOSE-5-PHOSPHATE ISOMERASE"/>
    <property type="match status" value="1"/>
</dbReference>
<dbReference type="PANTHER" id="PTHR11934:SF0">
    <property type="entry name" value="RIBOSE-5-PHOSPHATE ISOMERASE"/>
    <property type="match status" value="1"/>
</dbReference>
<dbReference type="Pfam" id="PF06026">
    <property type="entry name" value="Rib_5-P_isom_A"/>
    <property type="match status" value="1"/>
</dbReference>
<dbReference type="SUPFAM" id="SSF75445">
    <property type="entry name" value="D-ribose-5-phosphate isomerase (RpiA), lid domain"/>
    <property type="match status" value="1"/>
</dbReference>
<dbReference type="SUPFAM" id="SSF100950">
    <property type="entry name" value="NagB/RpiA/CoA transferase-like"/>
    <property type="match status" value="1"/>
</dbReference>
<reference key="1">
    <citation type="journal article" date="2008" name="J. Bacteriol.">
        <title>Complete genome sequence of Neisseria gonorrhoeae NCCP11945.</title>
        <authorList>
            <person name="Chung G.T."/>
            <person name="Yoo J.S."/>
            <person name="Oh H.B."/>
            <person name="Lee Y.S."/>
            <person name="Cha S.H."/>
            <person name="Kim S.J."/>
            <person name="Yoo C.K."/>
        </authorList>
    </citation>
    <scope>NUCLEOTIDE SEQUENCE [LARGE SCALE GENOMIC DNA]</scope>
    <source>
        <strain>NCCP11945</strain>
    </source>
</reference>
<proteinExistence type="evidence at protein level"/>
<sequence>MTTQDELKRIAAEKAVEFVPENEYIGIGTGSTINFFIEALGKSGKKIKGAVSTSKKSGELLARYDIPVVSLNEVSGLAVYIDGADEVNHALQMIKGGGGAHLNEKIVASASEKFVCIADESKYVSRLGKFPLPVEAVESARSLVSRKLLAMGGQPELRIGYTTFYGNQIVDVHGLNIDQPLTMEDEINKITGVLENGIFARDAADVLILGTEEGAKVIYPCQG</sequence>
<gene>
    <name evidence="1" type="primary">rpiA</name>
    <name type="ordered locus">NGK_0826</name>
</gene>
<feature type="chain" id="PRO_1000097678" description="Ribose-5-phosphate isomerase A">
    <location>
        <begin position="1"/>
        <end position="223"/>
    </location>
</feature>
<feature type="active site" description="Proton acceptor" evidence="1">
    <location>
        <position position="104"/>
    </location>
</feature>
<feature type="binding site" evidence="1">
    <location>
        <begin position="29"/>
        <end position="32"/>
    </location>
    <ligand>
        <name>substrate</name>
    </ligand>
</feature>
<feature type="binding site" evidence="1">
    <location>
        <begin position="82"/>
        <end position="85"/>
    </location>
    <ligand>
        <name>substrate</name>
    </ligand>
</feature>
<feature type="binding site" evidence="1">
    <location>
        <begin position="95"/>
        <end position="98"/>
    </location>
    <ligand>
        <name>substrate</name>
    </ligand>
</feature>
<feature type="binding site" evidence="1">
    <location>
        <position position="122"/>
    </location>
    <ligand>
        <name>substrate</name>
    </ligand>
</feature>
<feature type="helix" evidence="2">
    <location>
        <begin position="4"/>
        <end position="15"/>
    </location>
</feature>
<feature type="helix" evidence="2">
    <location>
        <begin position="16"/>
        <end position="18"/>
    </location>
</feature>
<feature type="strand" evidence="2">
    <location>
        <begin position="23"/>
        <end position="27"/>
    </location>
</feature>
<feature type="helix" evidence="2">
    <location>
        <begin position="31"/>
        <end position="43"/>
    </location>
</feature>
<feature type="strand" evidence="2">
    <location>
        <begin position="48"/>
        <end position="54"/>
    </location>
</feature>
<feature type="helix" evidence="2">
    <location>
        <begin position="55"/>
        <end position="63"/>
    </location>
</feature>
<feature type="helix" evidence="2">
    <location>
        <begin position="71"/>
        <end position="73"/>
    </location>
</feature>
<feature type="strand" evidence="2">
    <location>
        <begin position="77"/>
        <end position="82"/>
    </location>
</feature>
<feature type="strand" evidence="2">
    <location>
        <begin position="85"/>
        <end position="87"/>
    </location>
</feature>
<feature type="helix" evidence="2">
    <location>
        <begin position="101"/>
        <end position="109"/>
    </location>
</feature>
<feature type="strand" evidence="2">
    <location>
        <begin position="114"/>
        <end position="119"/>
    </location>
</feature>
<feature type="helix" evidence="2">
    <location>
        <begin position="120"/>
        <end position="122"/>
    </location>
</feature>
<feature type="strand" evidence="2">
    <location>
        <begin position="125"/>
        <end position="127"/>
    </location>
</feature>
<feature type="strand" evidence="2">
    <location>
        <begin position="132"/>
        <end position="136"/>
    </location>
</feature>
<feature type="helix" evidence="2">
    <location>
        <begin position="138"/>
        <end position="140"/>
    </location>
</feature>
<feature type="helix" evidence="2">
    <location>
        <begin position="141"/>
        <end position="151"/>
    </location>
</feature>
<feature type="strand" evidence="2">
    <location>
        <begin position="154"/>
        <end position="157"/>
    </location>
</feature>
<feature type="strand" evidence="2">
    <location>
        <begin position="168"/>
        <end position="174"/>
    </location>
</feature>
<feature type="helix" evidence="2">
    <location>
        <begin position="180"/>
        <end position="188"/>
    </location>
</feature>
<feature type="strand" evidence="2">
    <location>
        <begin position="193"/>
        <end position="200"/>
    </location>
</feature>
<feature type="strand" evidence="2">
    <location>
        <begin position="205"/>
        <end position="211"/>
    </location>
</feature>
<feature type="strand" evidence="2">
    <location>
        <begin position="214"/>
        <end position="218"/>
    </location>
</feature>
<name>RPIA_NEIG2</name>
<accession>B4RL16</accession>
<comment type="function">
    <text evidence="1">Catalyzes the reversible conversion of ribose-5-phosphate to ribulose 5-phosphate.</text>
</comment>
<comment type="catalytic activity">
    <reaction evidence="1">
        <text>aldehydo-D-ribose 5-phosphate = D-ribulose 5-phosphate</text>
        <dbReference type="Rhea" id="RHEA:14657"/>
        <dbReference type="ChEBI" id="CHEBI:58121"/>
        <dbReference type="ChEBI" id="CHEBI:58273"/>
        <dbReference type="EC" id="5.3.1.6"/>
    </reaction>
</comment>
<comment type="pathway">
    <text evidence="1">Carbohydrate degradation; pentose phosphate pathway; D-ribose 5-phosphate from D-ribulose 5-phosphate (non-oxidative stage): step 1/1.</text>
</comment>
<comment type="subunit">
    <text evidence="1">Homodimer.</text>
</comment>
<comment type="similarity">
    <text evidence="1">Belongs to the ribose 5-phosphate isomerase family.</text>
</comment>
<evidence type="ECO:0000255" key="1">
    <source>
        <dbReference type="HAMAP-Rule" id="MF_00170"/>
    </source>
</evidence>
<evidence type="ECO:0007829" key="2">
    <source>
        <dbReference type="PDB" id="5UF2"/>
    </source>
</evidence>
<keyword id="KW-0002">3D-structure</keyword>
<keyword id="KW-0413">Isomerase</keyword>
<protein>
    <recommendedName>
        <fullName evidence="1">Ribose-5-phosphate isomerase A</fullName>
        <ecNumber evidence="1">5.3.1.6</ecNumber>
    </recommendedName>
    <alternativeName>
        <fullName evidence="1">Phosphoriboisomerase A</fullName>
        <shortName evidence="1">PRI</shortName>
    </alternativeName>
</protein>
<organism>
    <name type="scientific">Neisseria gonorrhoeae (strain NCCP11945)</name>
    <dbReference type="NCBI Taxonomy" id="521006"/>
    <lineage>
        <taxon>Bacteria</taxon>
        <taxon>Pseudomonadati</taxon>
        <taxon>Pseudomonadota</taxon>
        <taxon>Betaproteobacteria</taxon>
        <taxon>Neisseriales</taxon>
        <taxon>Neisseriaceae</taxon>
        <taxon>Neisseria</taxon>
    </lineage>
</organism>